<name>DAAF1_DROPS</name>
<feature type="chain" id="PRO_0000363939" description="Dynein axonemal assembly factor 1 homolog">
    <location>
        <begin position="1"/>
        <end position="1582"/>
    </location>
</feature>
<feature type="repeat" description="LRR 1">
    <location>
        <begin position="38"/>
        <end position="60"/>
    </location>
</feature>
<feature type="repeat" description="LRR 2">
    <location>
        <begin position="61"/>
        <end position="82"/>
    </location>
</feature>
<feature type="repeat" description="LRR 3">
    <location>
        <begin position="83"/>
        <end position="104"/>
    </location>
</feature>
<feature type="repeat" description="LRR 4">
    <location>
        <begin position="105"/>
        <end position="126"/>
    </location>
</feature>
<feature type="repeat" description="LRR 5">
    <location>
        <begin position="129"/>
        <end position="150"/>
    </location>
</feature>
<feature type="repeat" description="LRR 6">
    <location>
        <begin position="154"/>
        <end position="175"/>
    </location>
</feature>
<feature type="domain" description="LRRCT">
    <location>
        <begin position="189"/>
        <end position="227"/>
    </location>
</feature>
<feature type="region of interest" description="Disordered" evidence="2">
    <location>
        <begin position="245"/>
        <end position="420"/>
    </location>
</feature>
<feature type="region of interest" description="Disordered" evidence="2">
    <location>
        <begin position="560"/>
        <end position="587"/>
    </location>
</feature>
<feature type="region of interest" description="Disordered" evidence="2">
    <location>
        <begin position="859"/>
        <end position="878"/>
    </location>
</feature>
<feature type="region of interest" description="Disordered" evidence="2">
    <location>
        <begin position="913"/>
        <end position="942"/>
    </location>
</feature>
<feature type="region of interest" description="Disordered" evidence="2">
    <location>
        <begin position="1073"/>
        <end position="1092"/>
    </location>
</feature>
<feature type="region of interest" description="Disordered" evidence="2">
    <location>
        <begin position="1101"/>
        <end position="1137"/>
    </location>
</feature>
<feature type="region of interest" description="Disordered" evidence="2">
    <location>
        <begin position="1150"/>
        <end position="1218"/>
    </location>
</feature>
<feature type="region of interest" description="Disordered" evidence="2">
    <location>
        <begin position="1305"/>
        <end position="1345"/>
    </location>
</feature>
<feature type="region of interest" description="Disordered" evidence="2">
    <location>
        <begin position="1358"/>
        <end position="1438"/>
    </location>
</feature>
<feature type="region of interest" description="Disordered" evidence="2">
    <location>
        <begin position="1484"/>
        <end position="1517"/>
    </location>
</feature>
<feature type="region of interest" description="Disordered" evidence="2">
    <location>
        <begin position="1529"/>
        <end position="1548"/>
    </location>
</feature>
<feature type="compositionally biased region" description="Low complexity" evidence="2">
    <location>
        <begin position="313"/>
        <end position="327"/>
    </location>
</feature>
<feature type="compositionally biased region" description="Basic and acidic residues" evidence="2">
    <location>
        <begin position="339"/>
        <end position="392"/>
    </location>
</feature>
<feature type="compositionally biased region" description="Polar residues" evidence="2">
    <location>
        <begin position="409"/>
        <end position="420"/>
    </location>
</feature>
<feature type="compositionally biased region" description="Acidic residues" evidence="2">
    <location>
        <begin position="572"/>
        <end position="582"/>
    </location>
</feature>
<feature type="compositionally biased region" description="Acidic residues" evidence="2">
    <location>
        <begin position="928"/>
        <end position="942"/>
    </location>
</feature>
<feature type="compositionally biased region" description="Basic and acidic residues" evidence="2">
    <location>
        <begin position="1078"/>
        <end position="1092"/>
    </location>
</feature>
<feature type="compositionally biased region" description="Basic and acidic residues" evidence="2">
    <location>
        <begin position="1103"/>
        <end position="1125"/>
    </location>
</feature>
<feature type="compositionally biased region" description="Low complexity" evidence="2">
    <location>
        <begin position="1166"/>
        <end position="1178"/>
    </location>
</feature>
<feature type="compositionally biased region" description="Basic and acidic residues" evidence="2">
    <location>
        <begin position="1321"/>
        <end position="1335"/>
    </location>
</feature>
<feature type="compositionally biased region" description="Basic and acidic residues" evidence="2">
    <location>
        <begin position="1398"/>
        <end position="1427"/>
    </location>
</feature>
<feature type="compositionally biased region" description="Basic and acidic residues" evidence="2">
    <location>
        <begin position="1484"/>
        <end position="1514"/>
    </location>
</feature>
<feature type="compositionally biased region" description="Acidic residues" evidence="2">
    <location>
        <begin position="1529"/>
        <end position="1540"/>
    </location>
</feature>
<keyword id="KW-0966">Cell projection</keyword>
<keyword id="KW-0969">Cilium</keyword>
<keyword id="KW-0433">Leucine-rich repeat</keyword>
<keyword id="KW-1185">Reference proteome</keyword>
<keyword id="KW-0677">Repeat</keyword>
<dbReference type="EMBL" id="CH379061">
    <property type="protein sequence ID" value="EAL33156.2"/>
    <property type="molecule type" value="Genomic_DNA"/>
</dbReference>
<dbReference type="SMR" id="Q29KL8"/>
<dbReference type="STRING" id="46245.Q29KL8"/>
<dbReference type="eggNOG" id="ENOG502QQFE">
    <property type="taxonomic scope" value="Eukaryota"/>
</dbReference>
<dbReference type="HOGENOM" id="CLU_001523_0_0_1"/>
<dbReference type="InParanoid" id="Q29KL8"/>
<dbReference type="OMA" id="WKREGYE"/>
<dbReference type="ChiTaRS" id="Trxr-1">
    <property type="organism name" value="fly"/>
</dbReference>
<dbReference type="Proteomes" id="UP000001819">
    <property type="component" value="Unplaced"/>
</dbReference>
<dbReference type="GO" id="GO:0005930">
    <property type="term" value="C:axoneme"/>
    <property type="evidence" value="ECO:0000250"/>
    <property type="project" value="UniProtKB"/>
</dbReference>
<dbReference type="GO" id="GO:0070840">
    <property type="term" value="F:dynein complex binding"/>
    <property type="evidence" value="ECO:0000250"/>
    <property type="project" value="UniProtKB"/>
</dbReference>
<dbReference type="GO" id="GO:0035082">
    <property type="term" value="P:axoneme assembly"/>
    <property type="evidence" value="ECO:0007669"/>
    <property type="project" value="TreeGrafter"/>
</dbReference>
<dbReference type="GO" id="GO:0060271">
    <property type="term" value="P:cilium assembly"/>
    <property type="evidence" value="ECO:0000250"/>
    <property type="project" value="UniProtKB"/>
</dbReference>
<dbReference type="FunFam" id="3.80.10.10:FF:000166">
    <property type="entry name" value="Dynein assembly factor 1, axonemal"/>
    <property type="match status" value="1"/>
</dbReference>
<dbReference type="FunFam" id="3.80.10.10:FF:000331">
    <property type="entry name" value="Dynein assembly factor 1, axonemal homolog"/>
    <property type="match status" value="1"/>
</dbReference>
<dbReference type="Gene3D" id="3.80.10.10">
    <property type="entry name" value="Ribonuclease Inhibitor"/>
    <property type="match status" value="2"/>
</dbReference>
<dbReference type="InterPro" id="IPR050576">
    <property type="entry name" value="Cilia_flagella_integrity"/>
</dbReference>
<dbReference type="InterPro" id="IPR001611">
    <property type="entry name" value="Leu-rich_rpt"/>
</dbReference>
<dbReference type="InterPro" id="IPR025875">
    <property type="entry name" value="Leu-rich_rpt_4"/>
</dbReference>
<dbReference type="InterPro" id="IPR032675">
    <property type="entry name" value="LRR_dom_sf"/>
</dbReference>
<dbReference type="PANTHER" id="PTHR45973:SF9">
    <property type="entry name" value="LEUCINE-RICH REPEAT-CONTAINING PROTEIN 46"/>
    <property type="match status" value="1"/>
</dbReference>
<dbReference type="PANTHER" id="PTHR45973">
    <property type="entry name" value="PROTEIN PHOSPHATASE 1 REGULATORY SUBUNIT SDS22-RELATED"/>
    <property type="match status" value="1"/>
</dbReference>
<dbReference type="Pfam" id="PF12799">
    <property type="entry name" value="LRR_4"/>
    <property type="match status" value="1"/>
</dbReference>
<dbReference type="Pfam" id="PF14580">
    <property type="entry name" value="LRR_9"/>
    <property type="match status" value="1"/>
</dbReference>
<dbReference type="SMART" id="SM00365">
    <property type="entry name" value="LRR_SD22"/>
    <property type="match status" value="3"/>
</dbReference>
<dbReference type="SUPFAM" id="SSF52075">
    <property type="entry name" value="Outer arm dynein light chain 1"/>
    <property type="match status" value="1"/>
</dbReference>
<dbReference type="PROSITE" id="PS51450">
    <property type="entry name" value="LRR"/>
    <property type="match status" value="6"/>
</dbReference>
<organism>
    <name type="scientific">Drosophila pseudoobscura pseudoobscura</name>
    <name type="common">Fruit fly</name>
    <dbReference type="NCBI Taxonomy" id="46245"/>
    <lineage>
        <taxon>Eukaryota</taxon>
        <taxon>Metazoa</taxon>
        <taxon>Ecdysozoa</taxon>
        <taxon>Arthropoda</taxon>
        <taxon>Hexapoda</taxon>
        <taxon>Insecta</taxon>
        <taxon>Pterygota</taxon>
        <taxon>Neoptera</taxon>
        <taxon>Endopterygota</taxon>
        <taxon>Diptera</taxon>
        <taxon>Brachycera</taxon>
        <taxon>Muscomorpha</taxon>
        <taxon>Ephydroidea</taxon>
        <taxon>Drosophilidae</taxon>
        <taxon>Drosophila</taxon>
        <taxon>Sophophora</taxon>
    </lineage>
</organism>
<evidence type="ECO:0000250" key="1"/>
<evidence type="ECO:0000256" key="2">
    <source>
        <dbReference type="SAM" id="MobiDB-lite"/>
    </source>
</evidence>
<evidence type="ECO:0000305" key="3"/>
<gene>
    <name type="primary">dtr</name>
    <name type="ORF">GA16341</name>
</gene>
<accession>Q29KL8</accession>
<sequence length="1582" mass="180080">MCERGFARRREEVTGLNRITEKGLKDICKRDKLYQTPRLNDVLYLHFQGYQCIENLDEYTELKSLWLESNAISEIQNLTKLTKLKCLYLQNNLITKMENLEFNRELDTLNLSQNHIRKIENIGTDILPVLNTLNITSNYLTDSASLAALVECKTLSVLDLSNNRIDDILIVKIFEQMPSLKVLVLQGNPVVSRLPQYRKTLILACKELTYLDSRPVFPRDRACAEAWKREGYEGERKEVQRWNRAERRKTRESVNSTIRMRNRHLKPEDQVPLLTSSDSEEEQKGISSAEKAQKRAEMEYGSVDTMWDEVSGESQASEHSTTSSTSAEDNESAGSQADHIAERISNRRVKPLEGRPKVLYDEAASGDEKAVTTTDSKKDSNAEDLPELKDITEALLQSDTASKPPLQPTLLQSDSGSEMDNTADLEQTCQTLLQVAQGNDDGDPTPKQIKSQMIDEMYESFGSDLFEEHPLPIDQLLNESTKKYQLEAKVCCEEETTKTPRDLYKEFIEEVTWRPKSKEQLEREQECVDASEKCAHDLAEMGSHLEEDLQELRDFTENLSSDVQEQAKDPSESDEEPTEEEMEVKSQLLKEQFQDRKKRLKEAIEERKTMQKNLEARKEDLNKSYNLFAKIMDDATDNVPKRVFGAGCDVPSKDWDKEECMQQLPLTSMEDSINGRPSSNDEDILTRPLTELTSAEAAEEICSQLDRKLAGEEEALRQLLCDLENENEILYSIETQIKYAESISVEDSQSQMVCASLLNDLISDVIYKDITEMGPNSYPLGPIESDEEYTYSEEPKLEKMVPPHLENPAGGKSLRECVDTFKEFFASKGNDKPRQESHTHLEKIRAAKALLKSKSLAEFSKDTPESLDAQLAKDEDRRKRHVAASAGRCFAKREKYDDTLEVVDNRLMVVKKDTGELEELPPPPELISDSESEKEVEEDDDAYDTAEETLQEYPRVPWTTPYKPKPRKAAEHLVNEAMQRVLAEQFSELPDDTKENEPQEDEFFSLEAKETFGNLDSEFFQKLDLDKVTTANNAEAATECMRSYNELKACMKSGSTELQLTSEENEMLQEMLSSNEDLEAKHKSNDDPLVERDNELLNKMMQRMKEHEERARELQEQLEKEKEEENSGPIKLSMGEGSMLYQRWSPLSLTEIIDPQAEEGGRQAEEGGAQQEEGGAQSEEGDDQAGVPQAEEGVTQGEESVLQEEETHAENGVAQAEGRVLQSPVIYPIIGYEDIDDDDAASDFTTDYSSDDEVAVVVPPKISPAMLKAYYYDGFEEDMRMVRENEARTRRGLRAIMQKEKQMWKDNEEEMAADMAPSASPKEEHIPEVKSETETAKPTVETAKDKWAKIASRLNEFLDPEAMEQLESHEFGESDGEDDVDLTGLQNYDEESETECESALKETTEIGDSEKQENKTQDETLDPKDTEAITDEWSPYQTSFEENRTAFCDRHNKLTMITEQTSDVGDPETETTKLICQWEKIIPEDSKIGDGPTEKFLDQKAQDNTENTDERPENPKNFITLDYFVDTEPSESLEDTEATETPEVSTEQTLKTEQMEFNLDVLNDDGDVVIKEVTVEAQVTYQ</sequence>
<comment type="function">
    <text evidence="1">Cilium-specific protein required for cilia structures.</text>
</comment>
<comment type="subcellular location">
    <subcellularLocation>
        <location evidence="1">Cell projection</location>
        <location evidence="1">Cilium</location>
    </subcellularLocation>
</comment>
<comment type="similarity">
    <text evidence="3">Belongs to the DNAAF1 family.</text>
</comment>
<proteinExistence type="inferred from homology"/>
<protein>
    <recommendedName>
        <fullName>Dynein axonemal assembly factor 1 homolog</fullName>
    </recommendedName>
    <alternativeName>
        <fullName>Defective transmitter-recycling protein</fullName>
    </alternativeName>
    <alternativeName>
        <fullName>Leucine-rich repeat-containing protein 50 homolog</fullName>
    </alternativeName>
</protein>
<reference key="1">
    <citation type="journal article" date="2005" name="Genome Res.">
        <title>Comparative genome sequencing of Drosophila pseudoobscura: chromosomal, gene, and cis-element evolution.</title>
        <authorList>
            <person name="Richards S."/>
            <person name="Liu Y."/>
            <person name="Bettencourt B.R."/>
            <person name="Hradecky P."/>
            <person name="Letovsky S."/>
            <person name="Nielsen R."/>
            <person name="Thornton K."/>
            <person name="Hubisz M.J."/>
            <person name="Chen R."/>
            <person name="Meisel R.P."/>
            <person name="Couronne O."/>
            <person name="Hua S."/>
            <person name="Smith M.A."/>
            <person name="Zhang P."/>
            <person name="Liu J."/>
            <person name="Bussemaker H.J."/>
            <person name="van Batenburg M.F."/>
            <person name="Howells S.L."/>
            <person name="Scherer S.E."/>
            <person name="Sodergren E."/>
            <person name="Matthews B.B."/>
            <person name="Crosby M.A."/>
            <person name="Schroeder A.J."/>
            <person name="Ortiz-Barrientos D."/>
            <person name="Rives C.M."/>
            <person name="Metzker M.L."/>
            <person name="Muzny D.M."/>
            <person name="Scott G."/>
            <person name="Steffen D."/>
            <person name="Wheeler D.A."/>
            <person name="Worley K.C."/>
            <person name="Havlak P."/>
            <person name="Durbin K.J."/>
            <person name="Egan A."/>
            <person name="Gill R."/>
            <person name="Hume J."/>
            <person name="Morgan M.B."/>
            <person name="Miner G."/>
            <person name="Hamilton C."/>
            <person name="Huang Y."/>
            <person name="Waldron L."/>
            <person name="Verduzco D."/>
            <person name="Clerc-Blankenburg K.P."/>
            <person name="Dubchak I."/>
            <person name="Noor M.A.F."/>
            <person name="Anderson W."/>
            <person name="White K.P."/>
            <person name="Clark A.G."/>
            <person name="Schaeffer S.W."/>
            <person name="Gelbart W.M."/>
            <person name="Weinstock G.M."/>
            <person name="Gibbs R.A."/>
        </authorList>
    </citation>
    <scope>NUCLEOTIDE SEQUENCE [LARGE SCALE GENOMIC DNA]</scope>
    <source>
        <strain>MV2-25 / Tucson 14011-0121.94</strain>
    </source>
</reference>